<name>RNC_HAHCH</name>
<dbReference type="EC" id="3.1.26.3" evidence="1"/>
<dbReference type="EMBL" id="CP000155">
    <property type="protein sequence ID" value="ABC28642.1"/>
    <property type="molecule type" value="Genomic_DNA"/>
</dbReference>
<dbReference type="RefSeq" id="WP_011395714.1">
    <property type="nucleotide sequence ID" value="NC_007645.1"/>
</dbReference>
<dbReference type="SMR" id="Q2SL32"/>
<dbReference type="STRING" id="349521.HCH_01800"/>
<dbReference type="KEGG" id="hch:HCH_01800"/>
<dbReference type="eggNOG" id="COG0571">
    <property type="taxonomic scope" value="Bacteria"/>
</dbReference>
<dbReference type="HOGENOM" id="CLU_000907_1_1_6"/>
<dbReference type="OrthoDB" id="9805026at2"/>
<dbReference type="Proteomes" id="UP000000238">
    <property type="component" value="Chromosome"/>
</dbReference>
<dbReference type="GO" id="GO:0005737">
    <property type="term" value="C:cytoplasm"/>
    <property type="evidence" value="ECO:0007669"/>
    <property type="project" value="UniProtKB-SubCell"/>
</dbReference>
<dbReference type="GO" id="GO:0003725">
    <property type="term" value="F:double-stranded RNA binding"/>
    <property type="evidence" value="ECO:0007669"/>
    <property type="project" value="TreeGrafter"/>
</dbReference>
<dbReference type="GO" id="GO:0046872">
    <property type="term" value="F:metal ion binding"/>
    <property type="evidence" value="ECO:0007669"/>
    <property type="project" value="UniProtKB-KW"/>
</dbReference>
<dbReference type="GO" id="GO:0004525">
    <property type="term" value="F:ribonuclease III activity"/>
    <property type="evidence" value="ECO:0007669"/>
    <property type="project" value="UniProtKB-UniRule"/>
</dbReference>
<dbReference type="GO" id="GO:0019843">
    <property type="term" value="F:rRNA binding"/>
    <property type="evidence" value="ECO:0007669"/>
    <property type="project" value="UniProtKB-KW"/>
</dbReference>
<dbReference type="GO" id="GO:0006397">
    <property type="term" value="P:mRNA processing"/>
    <property type="evidence" value="ECO:0007669"/>
    <property type="project" value="UniProtKB-UniRule"/>
</dbReference>
<dbReference type="GO" id="GO:0010468">
    <property type="term" value="P:regulation of gene expression"/>
    <property type="evidence" value="ECO:0007669"/>
    <property type="project" value="TreeGrafter"/>
</dbReference>
<dbReference type="GO" id="GO:0006364">
    <property type="term" value="P:rRNA processing"/>
    <property type="evidence" value="ECO:0007669"/>
    <property type="project" value="UniProtKB-UniRule"/>
</dbReference>
<dbReference type="GO" id="GO:0008033">
    <property type="term" value="P:tRNA processing"/>
    <property type="evidence" value="ECO:0007669"/>
    <property type="project" value="UniProtKB-KW"/>
</dbReference>
<dbReference type="CDD" id="cd10845">
    <property type="entry name" value="DSRM_RNAse_III_family"/>
    <property type="match status" value="1"/>
</dbReference>
<dbReference type="CDD" id="cd00593">
    <property type="entry name" value="RIBOc"/>
    <property type="match status" value="1"/>
</dbReference>
<dbReference type="FunFam" id="1.10.1520.10:FF:000001">
    <property type="entry name" value="Ribonuclease 3"/>
    <property type="match status" value="1"/>
</dbReference>
<dbReference type="FunFam" id="3.30.160.20:FF:000003">
    <property type="entry name" value="Ribonuclease 3"/>
    <property type="match status" value="1"/>
</dbReference>
<dbReference type="Gene3D" id="3.30.160.20">
    <property type="match status" value="1"/>
</dbReference>
<dbReference type="Gene3D" id="1.10.1520.10">
    <property type="entry name" value="Ribonuclease III domain"/>
    <property type="match status" value="1"/>
</dbReference>
<dbReference type="HAMAP" id="MF_00104">
    <property type="entry name" value="RNase_III"/>
    <property type="match status" value="1"/>
</dbReference>
<dbReference type="InterPro" id="IPR014720">
    <property type="entry name" value="dsRBD_dom"/>
</dbReference>
<dbReference type="InterPro" id="IPR011907">
    <property type="entry name" value="RNase_III"/>
</dbReference>
<dbReference type="InterPro" id="IPR000999">
    <property type="entry name" value="RNase_III_dom"/>
</dbReference>
<dbReference type="InterPro" id="IPR036389">
    <property type="entry name" value="RNase_III_sf"/>
</dbReference>
<dbReference type="NCBIfam" id="TIGR02191">
    <property type="entry name" value="RNaseIII"/>
    <property type="match status" value="1"/>
</dbReference>
<dbReference type="PANTHER" id="PTHR11207:SF0">
    <property type="entry name" value="RIBONUCLEASE 3"/>
    <property type="match status" value="1"/>
</dbReference>
<dbReference type="PANTHER" id="PTHR11207">
    <property type="entry name" value="RIBONUCLEASE III"/>
    <property type="match status" value="1"/>
</dbReference>
<dbReference type="Pfam" id="PF00035">
    <property type="entry name" value="dsrm"/>
    <property type="match status" value="1"/>
</dbReference>
<dbReference type="Pfam" id="PF14622">
    <property type="entry name" value="Ribonucleas_3_3"/>
    <property type="match status" value="1"/>
</dbReference>
<dbReference type="SMART" id="SM00358">
    <property type="entry name" value="DSRM"/>
    <property type="match status" value="1"/>
</dbReference>
<dbReference type="SMART" id="SM00535">
    <property type="entry name" value="RIBOc"/>
    <property type="match status" value="1"/>
</dbReference>
<dbReference type="SUPFAM" id="SSF54768">
    <property type="entry name" value="dsRNA-binding domain-like"/>
    <property type="match status" value="1"/>
</dbReference>
<dbReference type="SUPFAM" id="SSF69065">
    <property type="entry name" value="RNase III domain-like"/>
    <property type="match status" value="1"/>
</dbReference>
<dbReference type="PROSITE" id="PS50137">
    <property type="entry name" value="DS_RBD"/>
    <property type="match status" value="1"/>
</dbReference>
<dbReference type="PROSITE" id="PS00517">
    <property type="entry name" value="RNASE_3_1"/>
    <property type="match status" value="1"/>
</dbReference>
<dbReference type="PROSITE" id="PS50142">
    <property type="entry name" value="RNASE_3_2"/>
    <property type="match status" value="1"/>
</dbReference>
<proteinExistence type="inferred from homology"/>
<sequence>MTAKLERLQRALGYTFKEPALLTLALTHRSFGGRNNERLEFLGDSVLNFIIADYLFGRFEEAREGQLSRLRARMVKGVTLAEIAREFDLGEYLRLGSGEMKSGGFRRESILADALESIIGAIYLDAGFEVCADRVLNWFEARLQKLNLKDTQKDSKTRLQEYLQARQLNLPRYEVISVQGEAHAQTFHVRCEIDGLSDATEGTGSSRRVAEQKAAKQALLALGVDQ</sequence>
<feature type="chain" id="PRO_1000075764" description="Ribonuclease 3">
    <location>
        <begin position="1"/>
        <end position="226"/>
    </location>
</feature>
<feature type="domain" description="RNase III" evidence="1">
    <location>
        <begin position="5"/>
        <end position="127"/>
    </location>
</feature>
<feature type="domain" description="DRBM" evidence="1">
    <location>
        <begin position="154"/>
        <end position="224"/>
    </location>
</feature>
<feature type="active site" evidence="1">
    <location>
        <position position="44"/>
    </location>
</feature>
<feature type="active site" evidence="1">
    <location>
        <position position="116"/>
    </location>
</feature>
<feature type="binding site" evidence="1">
    <location>
        <position position="40"/>
    </location>
    <ligand>
        <name>Mg(2+)</name>
        <dbReference type="ChEBI" id="CHEBI:18420"/>
    </ligand>
</feature>
<feature type="binding site" evidence="1">
    <location>
        <position position="113"/>
    </location>
    <ligand>
        <name>Mg(2+)</name>
        <dbReference type="ChEBI" id="CHEBI:18420"/>
    </ligand>
</feature>
<feature type="binding site" evidence="1">
    <location>
        <position position="116"/>
    </location>
    <ligand>
        <name>Mg(2+)</name>
        <dbReference type="ChEBI" id="CHEBI:18420"/>
    </ligand>
</feature>
<reference key="1">
    <citation type="journal article" date="2005" name="Nucleic Acids Res.">
        <title>Genomic blueprint of Hahella chejuensis, a marine microbe producing an algicidal agent.</title>
        <authorList>
            <person name="Jeong H."/>
            <person name="Yim J.H."/>
            <person name="Lee C."/>
            <person name="Choi S.-H."/>
            <person name="Park Y.K."/>
            <person name="Yoon S.H."/>
            <person name="Hur C.-G."/>
            <person name="Kang H.-Y."/>
            <person name="Kim D."/>
            <person name="Lee H.H."/>
            <person name="Park K.H."/>
            <person name="Park S.-H."/>
            <person name="Park H.-S."/>
            <person name="Lee H.K."/>
            <person name="Oh T.K."/>
            <person name="Kim J.F."/>
        </authorList>
    </citation>
    <scope>NUCLEOTIDE SEQUENCE [LARGE SCALE GENOMIC DNA]</scope>
    <source>
        <strain>KCTC 2396</strain>
    </source>
</reference>
<accession>Q2SL32</accession>
<protein>
    <recommendedName>
        <fullName evidence="1">Ribonuclease 3</fullName>
        <ecNumber evidence="1">3.1.26.3</ecNumber>
    </recommendedName>
    <alternativeName>
        <fullName evidence="1">Ribonuclease III</fullName>
        <shortName evidence="1">RNase III</shortName>
    </alternativeName>
</protein>
<evidence type="ECO:0000255" key="1">
    <source>
        <dbReference type="HAMAP-Rule" id="MF_00104"/>
    </source>
</evidence>
<organism>
    <name type="scientific">Hahella chejuensis (strain KCTC 2396)</name>
    <dbReference type="NCBI Taxonomy" id="349521"/>
    <lineage>
        <taxon>Bacteria</taxon>
        <taxon>Pseudomonadati</taxon>
        <taxon>Pseudomonadota</taxon>
        <taxon>Gammaproteobacteria</taxon>
        <taxon>Oceanospirillales</taxon>
        <taxon>Hahellaceae</taxon>
        <taxon>Hahella</taxon>
    </lineage>
</organism>
<gene>
    <name evidence="1" type="primary">rnc</name>
    <name type="ordered locus">HCH_01800</name>
</gene>
<keyword id="KW-0963">Cytoplasm</keyword>
<keyword id="KW-0255">Endonuclease</keyword>
<keyword id="KW-0378">Hydrolase</keyword>
<keyword id="KW-0460">Magnesium</keyword>
<keyword id="KW-0479">Metal-binding</keyword>
<keyword id="KW-0507">mRNA processing</keyword>
<keyword id="KW-0540">Nuclease</keyword>
<keyword id="KW-1185">Reference proteome</keyword>
<keyword id="KW-0694">RNA-binding</keyword>
<keyword id="KW-0698">rRNA processing</keyword>
<keyword id="KW-0699">rRNA-binding</keyword>
<keyword id="KW-0819">tRNA processing</keyword>
<comment type="function">
    <text evidence="1">Digests double-stranded RNA. Involved in the processing of primary rRNA transcript to yield the immediate precursors to the large and small rRNAs (23S and 16S). Processes some mRNAs, and tRNAs when they are encoded in the rRNA operon. Processes pre-crRNA and tracrRNA of type II CRISPR loci if present in the organism.</text>
</comment>
<comment type="catalytic activity">
    <reaction evidence="1">
        <text>Endonucleolytic cleavage to 5'-phosphomonoester.</text>
        <dbReference type="EC" id="3.1.26.3"/>
    </reaction>
</comment>
<comment type="cofactor">
    <cofactor evidence="1">
        <name>Mg(2+)</name>
        <dbReference type="ChEBI" id="CHEBI:18420"/>
    </cofactor>
</comment>
<comment type="subunit">
    <text evidence="1">Homodimer.</text>
</comment>
<comment type="subcellular location">
    <subcellularLocation>
        <location evidence="1">Cytoplasm</location>
    </subcellularLocation>
</comment>
<comment type="similarity">
    <text evidence="1">Belongs to the ribonuclease III family.</text>
</comment>